<accession>B4TPI2</accession>
<protein>
    <recommendedName>
        <fullName evidence="1">Bifunctional polymyxin resistance protein ArnA</fullName>
    </recommendedName>
    <domain>
        <recommendedName>
            <fullName evidence="1">UDP-4-amino-4-deoxy-L-arabinose formyltransferase</fullName>
            <ecNumber evidence="1">2.1.2.13</ecNumber>
        </recommendedName>
        <alternativeName>
            <fullName evidence="1">ArnAFT</fullName>
        </alternativeName>
        <alternativeName>
            <fullName evidence="1">UDP-L-Ara4N formyltransferase</fullName>
        </alternativeName>
    </domain>
    <domain>
        <recommendedName>
            <fullName evidence="1">UDP-glucuronic acid oxidase, UDP-4-keto-hexauronic acid decarboxylating</fullName>
            <ecNumber evidence="1">1.1.1.305</ecNumber>
        </recommendedName>
        <alternativeName>
            <fullName evidence="1">ArnADH</fullName>
        </alternativeName>
        <alternativeName>
            <fullName evidence="1">UDP-GlcUA decarboxylase</fullName>
        </alternativeName>
        <alternativeName>
            <fullName evidence="1">UDP-glucuronic acid dehydrogenase</fullName>
        </alternativeName>
    </domain>
</protein>
<sequence length="660" mass="73539">MKAVIFAYHDMGCQGVQAVLDAGYEIAAIFTHADNPAENTFFGSVSRLAAELGIPVYAPDNVNHPIWVDRIAELAPDIIFSFYYRNLLSEEILHLAPAGAFNLHGSLLPAYRGRAPLNWVLVNGESETGVTLHRMVKRADAGEIVASQRVAIAQDDVALTLHHKLCQAARQLLNSILPTMKCGDIPSVPQRESDATYYGRRRPEDGLIDWHKPVSTVHNLVRAVAAPWPGAFSYNGSQKFTIWSSRICPDAQGALPGSVISVSPLRVACADGALEIITGQAGDGITVQGSQLAQTLGLVAGARLNRPPATSGKRRIRVLILGVNGFIGNHLTERLLNEENYEVYGMDIGSNAISRFLLHPRFHFVEGDISIHSEWIEYHVKKCDVVLPLVAIATPIEYTRNPLRVFELDFEENLRIIRYCVKYRKRVVFPSTSEVYGMCTDASFDEDKSNLIVGPVNKPRWIYSVSKQLLDRVIWAYGEKEGLRFTLFRPFNWMGPRLDSLNAARIGSSRAITQLILNLVEGTPIKLIDGGQQKRCFTDIRDGIEALFRIIVNDGDRCDGKIINIGNPDNEASIQELATLLLDSFDKHPLRCHFPPFAGFQVVESRSYYGKGYQDVAHRKPSIDNARRCLDWEPSIAMRDTVEETLDFFLRSVDIAERAS</sequence>
<proteinExistence type="inferred from homology"/>
<evidence type="ECO:0000255" key="1">
    <source>
        <dbReference type="HAMAP-Rule" id="MF_01166"/>
    </source>
</evidence>
<keyword id="KW-0046">Antibiotic resistance</keyword>
<keyword id="KW-0441">Lipid A biosynthesis</keyword>
<keyword id="KW-0444">Lipid biosynthesis</keyword>
<keyword id="KW-0443">Lipid metabolism</keyword>
<keyword id="KW-0448">Lipopolysaccharide biosynthesis</keyword>
<keyword id="KW-0511">Multifunctional enzyme</keyword>
<keyword id="KW-0520">NAD</keyword>
<keyword id="KW-0560">Oxidoreductase</keyword>
<keyword id="KW-0808">Transferase</keyword>
<comment type="function">
    <text evidence="1">Bifunctional enzyme that catalyzes the oxidative decarboxylation of UDP-glucuronic acid (UDP-GlcUA) to UDP-4-keto-arabinose (UDP-Ara4O) and the addition of a formyl group to UDP-4-amino-4-deoxy-L-arabinose (UDP-L-Ara4N) to form UDP-L-4-formamido-arabinose (UDP-L-Ara4FN). The modified arabinose is attached to lipid A and is required for resistance to polymyxin and cationic antimicrobial peptides.</text>
</comment>
<comment type="catalytic activity">
    <reaction evidence="1">
        <text>UDP-alpha-D-glucuronate + NAD(+) = UDP-beta-L-threo-pentopyranos-4-ulose + CO2 + NADH</text>
        <dbReference type="Rhea" id="RHEA:24702"/>
        <dbReference type="ChEBI" id="CHEBI:16526"/>
        <dbReference type="ChEBI" id="CHEBI:57540"/>
        <dbReference type="ChEBI" id="CHEBI:57945"/>
        <dbReference type="ChEBI" id="CHEBI:58052"/>
        <dbReference type="ChEBI" id="CHEBI:58710"/>
        <dbReference type="EC" id="1.1.1.305"/>
    </reaction>
</comment>
<comment type="catalytic activity">
    <reaction evidence="1">
        <text>UDP-4-amino-4-deoxy-beta-L-arabinose + (6R)-10-formyltetrahydrofolate = UDP-4-deoxy-4-formamido-beta-L-arabinose + (6S)-5,6,7,8-tetrahydrofolate + H(+)</text>
        <dbReference type="Rhea" id="RHEA:24706"/>
        <dbReference type="ChEBI" id="CHEBI:15378"/>
        <dbReference type="ChEBI" id="CHEBI:57453"/>
        <dbReference type="ChEBI" id="CHEBI:58708"/>
        <dbReference type="ChEBI" id="CHEBI:58709"/>
        <dbReference type="ChEBI" id="CHEBI:195366"/>
        <dbReference type="EC" id="2.1.2.13"/>
    </reaction>
</comment>
<comment type="pathway">
    <text evidence="1">Nucleotide-sugar biosynthesis; UDP-4-deoxy-4-formamido-beta-L-arabinose biosynthesis; UDP-4-deoxy-4-formamido-beta-L-arabinose from UDP-alpha-D-glucuronate: step 1/3.</text>
</comment>
<comment type="pathway">
    <text evidence="1">Nucleotide-sugar biosynthesis; UDP-4-deoxy-4-formamido-beta-L-arabinose biosynthesis; UDP-4-deoxy-4-formamido-beta-L-arabinose from UDP-alpha-D-glucuronate: step 3/3.</text>
</comment>
<comment type="pathway">
    <text evidence="1">Bacterial outer membrane biogenesis; lipopolysaccharide biosynthesis.</text>
</comment>
<comment type="subunit">
    <text evidence="1">Homohexamer, formed by a dimer of trimers.</text>
</comment>
<comment type="similarity">
    <text evidence="1">In the N-terminal section; belongs to the Fmt family. UDP-L-Ara4N formyltransferase subfamily.</text>
</comment>
<comment type="similarity">
    <text evidence="1">In the C-terminal section; belongs to the NAD(P)-dependent epimerase/dehydratase family. UDP-glucuronic acid decarboxylase subfamily.</text>
</comment>
<reference key="1">
    <citation type="journal article" date="2011" name="J. Bacteriol.">
        <title>Comparative genomics of 28 Salmonella enterica isolates: evidence for CRISPR-mediated adaptive sublineage evolution.</title>
        <authorList>
            <person name="Fricke W.F."/>
            <person name="Mammel M.K."/>
            <person name="McDermott P.F."/>
            <person name="Tartera C."/>
            <person name="White D.G."/>
            <person name="Leclerc J.E."/>
            <person name="Ravel J."/>
            <person name="Cebula T.A."/>
        </authorList>
    </citation>
    <scope>NUCLEOTIDE SEQUENCE [LARGE SCALE GENOMIC DNA]</scope>
    <source>
        <strain>CVM19633</strain>
    </source>
</reference>
<feature type="chain" id="PRO_1000137952" description="Bifunctional polymyxin resistance protein ArnA">
    <location>
        <begin position="1"/>
        <end position="660"/>
    </location>
</feature>
<feature type="region of interest" description="Formyltransferase ArnAFT">
    <location>
        <begin position="1"/>
        <end position="304"/>
    </location>
</feature>
<feature type="region of interest" description="Dehydrogenase ArnADH">
    <location>
        <begin position="314"/>
        <end position="660"/>
    </location>
</feature>
<feature type="active site" description="Proton donor; for formyltransferase activity" evidence="1">
    <location>
        <position position="104"/>
    </location>
</feature>
<feature type="active site" description="Proton acceptor; for decarboxylase activity" evidence="1">
    <location>
        <position position="434"/>
    </location>
</feature>
<feature type="active site" description="Proton donor; for decarboxylase activity" evidence="1">
    <location>
        <position position="619"/>
    </location>
</feature>
<feature type="binding site" evidence="1">
    <location>
        <position position="114"/>
    </location>
    <ligand>
        <name>(6R)-10-formyltetrahydrofolate</name>
        <dbReference type="ChEBI" id="CHEBI:195366"/>
    </ligand>
</feature>
<feature type="binding site" evidence="1">
    <location>
        <begin position="136"/>
        <end position="140"/>
    </location>
    <ligand>
        <name>(6R)-10-formyltetrahydrofolate</name>
        <dbReference type="ChEBI" id="CHEBI:195366"/>
    </ligand>
</feature>
<feature type="binding site" evidence="1">
    <location>
        <position position="347"/>
    </location>
    <ligand>
        <name>NAD(+)</name>
        <dbReference type="ChEBI" id="CHEBI:57540"/>
    </ligand>
</feature>
<feature type="binding site" evidence="1">
    <location>
        <begin position="368"/>
        <end position="369"/>
    </location>
    <ligand>
        <name>NAD(+)</name>
        <dbReference type="ChEBI" id="CHEBI:57540"/>
    </ligand>
</feature>
<feature type="binding site" evidence="1">
    <location>
        <position position="393"/>
    </location>
    <ligand>
        <name>UDP-alpha-D-glucuronate</name>
        <dbReference type="ChEBI" id="CHEBI:58052"/>
    </ligand>
</feature>
<feature type="binding site" evidence="1">
    <location>
        <position position="398"/>
    </location>
    <ligand>
        <name>UDP-alpha-D-glucuronate</name>
        <dbReference type="ChEBI" id="CHEBI:58052"/>
    </ligand>
</feature>
<feature type="binding site" evidence="1">
    <location>
        <begin position="432"/>
        <end position="433"/>
    </location>
    <ligand>
        <name>UDP-alpha-D-glucuronate</name>
        <dbReference type="ChEBI" id="CHEBI:58052"/>
    </ligand>
</feature>
<feature type="binding site" evidence="1">
    <location>
        <position position="460"/>
    </location>
    <ligand>
        <name>UDP-alpha-D-glucuronate</name>
        <dbReference type="ChEBI" id="CHEBI:58052"/>
    </ligand>
</feature>
<feature type="binding site" evidence="1">
    <location>
        <position position="492"/>
    </location>
    <ligand>
        <name>UDP-alpha-D-glucuronate</name>
        <dbReference type="ChEBI" id="CHEBI:58052"/>
    </ligand>
</feature>
<feature type="binding site" evidence="1">
    <location>
        <begin position="526"/>
        <end position="535"/>
    </location>
    <ligand>
        <name>UDP-alpha-D-glucuronate</name>
        <dbReference type="ChEBI" id="CHEBI:58052"/>
    </ligand>
</feature>
<feature type="binding site" evidence="1">
    <location>
        <position position="613"/>
    </location>
    <ligand>
        <name>UDP-alpha-D-glucuronate</name>
        <dbReference type="ChEBI" id="CHEBI:58052"/>
    </ligand>
</feature>
<feature type="site" description="Transition state stabilizer" evidence="1">
    <location>
        <position position="102"/>
    </location>
</feature>
<feature type="site" description="Raises pKa of active site His" evidence="1">
    <location>
        <position position="140"/>
    </location>
</feature>
<name>ARNA_SALSV</name>
<dbReference type="EC" id="2.1.2.13" evidence="1"/>
<dbReference type="EC" id="1.1.1.305" evidence="1"/>
<dbReference type="EMBL" id="CP001127">
    <property type="protein sequence ID" value="ACF90738.1"/>
    <property type="molecule type" value="Genomic_DNA"/>
</dbReference>
<dbReference type="RefSeq" id="WP_000648762.1">
    <property type="nucleotide sequence ID" value="NC_011094.1"/>
</dbReference>
<dbReference type="SMR" id="B4TPI2"/>
<dbReference type="KEGG" id="sew:SeSA_A2527"/>
<dbReference type="HOGENOM" id="CLU_007383_23_2_6"/>
<dbReference type="UniPathway" id="UPA00030"/>
<dbReference type="UniPathway" id="UPA00032">
    <property type="reaction ID" value="UER00492"/>
</dbReference>
<dbReference type="UniPathway" id="UPA00032">
    <property type="reaction ID" value="UER00494"/>
</dbReference>
<dbReference type="Proteomes" id="UP000001865">
    <property type="component" value="Chromosome"/>
</dbReference>
<dbReference type="GO" id="GO:0016020">
    <property type="term" value="C:membrane"/>
    <property type="evidence" value="ECO:0007669"/>
    <property type="project" value="GOC"/>
</dbReference>
<dbReference type="GO" id="GO:0016831">
    <property type="term" value="F:carboxy-lyase activity"/>
    <property type="evidence" value="ECO:0007669"/>
    <property type="project" value="InterPro"/>
</dbReference>
<dbReference type="GO" id="GO:0099619">
    <property type="term" value="F:UDP-4-amino-4-deoxy-L-arabinose formyltransferase activity"/>
    <property type="evidence" value="ECO:0007669"/>
    <property type="project" value="UniProtKB-EC"/>
</dbReference>
<dbReference type="GO" id="GO:0099618">
    <property type="term" value="F:UDP-glucuronate dehydrogenase activity"/>
    <property type="evidence" value="ECO:0007669"/>
    <property type="project" value="UniProtKB-EC"/>
</dbReference>
<dbReference type="GO" id="GO:0009245">
    <property type="term" value="P:lipid A biosynthetic process"/>
    <property type="evidence" value="ECO:0007669"/>
    <property type="project" value="UniProtKB-KW"/>
</dbReference>
<dbReference type="GO" id="GO:0009103">
    <property type="term" value="P:lipopolysaccharide biosynthetic process"/>
    <property type="evidence" value="ECO:0007669"/>
    <property type="project" value="UniProtKB-UniRule"/>
</dbReference>
<dbReference type="GO" id="GO:0046677">
    <property type="term" value="P:response to antibiotic"/>
    <property type="evidence" value="ECO:0007669"/>
    <property type="project" value="UniProtKB-KW"/>
</dbReference>
<dbReference type="CDD" id="cd08702">
    <property type="entry name" value="Arna_FMT_C"/>
    <property type="match status" value="1"/>
</dbReference>
<dbReference type="CDD" id="cd05257">
    <property type="entry name" value="Arna_like_SDR_e"/>
    <property type="match status" value="1"/>
</dbReference>
<dbReference type="FunFam" id="3.40.50.720:FF:000197">
    <property type="entry name" value="Bifunctional polymyxin resistance protein ArnA"/>
    <property type="match status" value="1"/>
</dbReference>
<dbReference type="Gene3D" id="3.40.50.12230">
    <property type="match status" value="1"/>
</dbReference>
<dbReference type="Gene3D" id="3.40.50.720">
    <property type="entry name" value="NAD(P)-binding Rossmann-like Domain"/>
    <property type="match status" value="1"/>
</dbReference>
<dbReference type="HAMAP" id="MF_01166">
    <property type="entry name" value="ArnA"/>
    <property type="match status" value="1"/>
</dbReference>
<dbReference type="InterPro" id="IPR045869">
    <property type="entry name" value="Arna-like_SDR_e"/>
</dbReference>
<dbReference type="InterPro" id="IPR021168">
    <property type="entry name" value="Bifun_polymyxin_resist_ArnA"/>
</dbReference>
<dbReference type="InterPro" id="IPR001509">
    <property type="entry name" value="Epimerase_deHydtase"/>
</dbReference>
<dbReference type="InterPro" id="IPR005793">
    <property type="entry name" value="Formyl_trans_C"/>
</dbReference>
<dbReference type="InterPro" id="IPR002376">
    <property type="entry name" value="Formyl_transf_N"/>
</dbReference>
<dbReference type="InterPro" id="IPR036477">
    <property type="entry name" value="Formyl_transf_N_sf"/>
</dbReference>
<dbReference type="InterPro" id="IPR011034">
    <property type="entry name" value="Formyl_transferase-like_C_sf"/>
</dbReference>
<dbReference type="InterPro" id="IPR050177">
    <property type="entry name" value="Lipid_A_modif_metabolic_enz"/>
</dbReference>
<dbReference type="InterPro" id="IPR036291">
    <property type="entry name" value="NAD(P)-bd_dom_sf"/>
</dbReference>
<dbReference type="NCBIfam" id="NF005414">
    <property type="entry name" value="PRK06988.1"/>
    <property type="match status" value="1"/>
</dbReference>
<dbReference type="NCBIfam" id="NF005998">
    <property type="entry name" value="PRK08125.1"/>
    <property type="match status" value="1"/>
</dbReference>
<dbReference type="NCBIfam" id="NF008872">
    <property type="entry name" value="PRK11908.1"/>
    <property type="match status" value="1"/>
</dbReference>
<dbReference type="PANTHER" id="PTHR43245">
    <property type="entry name" value="BIFUNCTIONAL POLYMYXIN RESISTANCE PROTEIN ARNA"/>
    <property type="match status" value="1"/>
</dbReference>
<dbReference type="PANTHER" id="PTHR43245:SF13">
    <property type="entry name" value="UDP-D-APIOSE_UDP-D-XYLOSE SYNTHASE 2"/>
    <property type="match status" value="1"/>
</dbReference>
<dbReference type="Pfam" id="PF01370">
    <property type="entry name" value="Epimerase"/>
    <property type="match status" value="1"/>
</dbReference>
<dbReference type="Pfam" id="PF02911">
    <property type="entry name" value="Formyl_trans_C"/>
    <property type="match status" value="1"/>
</dbReference>
<dbReference type="Pfam" id="PF00551">
    <property type="entry name" value="Formyl_trans_N"/>
    <property type="match status" value="1"/>
</dbReference>
<dbReference type="PIRSF" id="PIRSF036506">
    <property type="entry name" value="Bifun_polymyxin_resist_ArnA"/>
    <property type="match status" value="1"/>
</dbReference>
<dbReference type="SUPFAM" id="SSF50486">
    <property type="entry name" value="FMT C-terminal domain-like"/>
    <property type="match status" value="1"/>
</dbReference>
<dbReference type="SUPFAM" id="SSF53328">
    <property type="entry name" value="Formyltransferase"/>
    <property type="match status" value="1"/>
</dbReference>
<dbReference type="SUPFAM" id="SSF51735">
    <property type="entry name" value="NAD(P)-binding Rossmann-fold domains"/>
    <property type="match status" value="1"/>
</dbReference>
<organism>
    <name type="scientific">Salmonella schwarzengrund (strain CVM19633)</name>
    <dbReference type="NCBI Taxonomy" id="439843"/>
    <lineage>
        <taxon>Bacteria</taxon>
        <taxon>Pseudomonadati</taxon>
        <taxon>Pseudomonadota</taxon>
        <taxon>Gammaproteobacteria</taxon>
        <taxon>Enterobacterales</taxon>
        <taxon>Enterobacteriaceae</taxon>
        <taxon>Salmonella</taxon>
    </lineage>
</organism>
<gene>
    <name evidence="1" type="primary">arnA</name>
    <name type="ordered locus">SeSA_A2527</name>
</gene>